<organism>
    <name type="scientific">Bartonella henselae (strain ATCC 49882 / DSM 28221 / CCUG 30454 / Houston 1)</name>
    <name type="common">Rochalimaea henselae</name>
    <dbReference type="NCBI Taxonomy" id="283166"/>
    <lineage>
        <taxon>Bacteria</taxon>
        <taxon>Pseudomonadati</taxon>
        <taxon>Pseudomonadota</taxon>
        <taxon>Alphaproteobacteria</taxon>
        <taxon>Hyphomicrobiales</taxon>
        <taxon>Bartonellaceae</taxon>
        <taxon>Bartonella</taxon>
    </lineage>
</organism>
<evidence type="ECO:0000255" key="1">
    <source>
        <dbReference type="HAMAP-Rule" id="MF_01187"/>
    </source>
</evidence>
<feature type="chain" id="PRO_0000291057" description="UPF0434 protein BH12860">
    <location>
        <begin position="1"/>
        <end position="65"/>
    </location>
</feature>
<sequence>MITDPKMLELLVCPITGGTLSLNRKTQELISLEAKLAYPIRDGVPIMLASEARPLQNNGKELHKK</sequence>
<gene>
    <name type="ordered locus">BH12860</name>
</gene>
<reference key="1">
    <citation type="journal article" date="2004" name="Proc. Natl. Acad. Sci. U.S.A.">
        <title>The louse-borne human pathogen Bartonella quintana is a genomic derivative of the zoonotic agent Bartonella henselae.</title>
        <authorList>
            <person name="Alsmark U.C.M."/>
            <person name="Frank A.C."/>
            <person name="Karlberg E.O."/>
            <person name="Legault B.-A."/>
            <person name="Ardell D.H."/>
            <person name="Canbaeck B."/>
            <person name="Eriksson A.-S."/>
            <person name="Naeslund A.K."/>
            <person name="Handley S.A."/>
            <person name="Huvet M."/>
            <person name="La Scola B."/>
            <person name="Holmberg M."/>
            <person name="Andersson S.G.E."/>
        </authorList>
    </citation>
    <scope>NUCLEOTIDE SEQUENCE [LARGE SCALE GENOMIC DNA]</scope>
    <source>
        <strain>ATCC 49882 / DSM 28221 / CCUG 30454 / Houston 1</strain>
    </source>
</reference>
<comment type="similarity">
    <text evidence="1">Belongs to the UPF0434 family.</text>
</comment>
<protein>
    <recommendedName>
        <fullName evidence="1">UPF0434 protein BH12860</fullName>
    </recommendedName>
</protein>
<name>Y1286_BARHE</name>
<dbReference type="EMBL" id="BX897699">
    <property type="protein sequence ID" value="CAF28060.1"/>
    <property type="molecule type" value="Genomic_DNA"/>
</dbReference>
<dbReference type="SMR" id="Q6G2E7"/>
<dbReference type="PaxDb" id="283166-BH12860"/>
<dbReference type="DNASU" id="2865468"/>
<dbReference type="EnsemblBacteria" id="CAF28060">
    <property type="protein sequence ID" value="CAF28060"/>
    <property type="gene ID" value="BH12860"/>
</dbReference>
<dbReference type="KEGG" id="bhe:BH12860"/>
<dbReference type="eggNOG" id="COG2835">
    <property type="taxonomic scope" value="Bacteria"/>
</dbReference>
<dbReference type="Proteomes" id="UP000000421">
    <property type="component" value="Chromosome"/>
</dbReference>
<dbReference type="GO" id="GO:0005829">
    <property type="term" value="C:cytosol"/>
    <property type="evidence" value="ECO:0007669"/>
    <property type="project" value="TreeGrafter"/>
</dbReference>
<dbReference type="FunFam" id="2.20.25.10:FF:000002">
    <property type="entry name" value="UPF0434 protein YcaR"/>
    <property type="match status" value="1"/>
</dbReference>
<dbReference type="Gene3D" id="2.20.25.10">
    <property type="match status" value="1"/>
</dbReference>
<dbReference type="HAMAP" id="MF_01187">
    <property type="entry name" value="UPF0434"/>
    <property type="match status" value="1"/>
</dbReference>
<dbReference type="InterPro" id="IPR005651">
    <property type="entry name" value="Trm112-like"/>
</dbReference>
<dbReference type="PANTHER" id="PTHR33505:SF4">
    <property type="entry name" value="PROTEIN PREY, MITOCHONDRIAL"/>
    <property type="match status" value="1"/>
</dbReference>
<dbReference type="PANTHER" id="PTHR33505">
    <property type="entry name" value="ZGC:162634"/>
    <property type="match status" value="1"/>
</dbReference>
<dbReference type="Pfam" id="PF03966">
    <property type="entry name" value="Trm112p"/>
    <property type="match status" value="1"/>
</dbReference>
<dbReference type="SUPFAM" id="SSF158997">
    <property type="entry name" value="Trm112p-like"/>
    <property type="match status" value="1"/>
</dbReference>
<accession>Q6G2E7</accession>
<proteinExistence type="inferred from homology"/>